<accession>Q3A2F1</accession>
<organism>
    <name type="scientific">Syntrophotalea carbinolica (strain DSM 2380 / NBRC 103641 / GraBd1)</name>
    <name type="common">Pelobacter carbinolicus</name>
    <dbReference type="NCBI Taxonomy" id="338963"/>
    <lineage>
        <taxon>Bacteria</taxon>
        <taxon>Pseudomonadati</taxon>
        <taxon>Thermodesulfobacteriota</taxon>
        <taxon>Desulfuromonadia</taxon>
        <taxon>Desulfuromonadales</taxon>
        <taxon>Syntrophotaleaceae</taxon>
        <taxon>Syntrophotalea</taxon>
    </lineage>
</organism>
<name>Y2217_SYNC1</name>
<sequence>MTYQRLSLGRWGEDIAAGYLRRQGMKILDRNIRTPVGELDIVARHKRMLIFVEVKTRRGISHGYPQEAVGAAKQRQILRAAQWYLAERRLDRLQPRFDVIAVRRRGDEAEVEHFPGAFDVDGW</sequence>
<evidence type="ECO:0000255" key="1">
    <source>
        <dbReference type="HAMAP-Rule" id="MF_00048"/>
    </source>
</evidence>
<protein>
    <recommendedName>
        <fullName evidence="1">UPF0102 protein Pcar_2217</fullName>
    </recommendedName>
</protein>
<comment type="similarity">
    <text evidence="1">Belongs to the UPF0102 family.</text>
</comment>
<feature type="chain" id="PRO_1000009242" description="UPF0102 protein Pcar_2217">
    <location>
        <begin position="1"/>
        <end position="123"/>
    </location>
</feature>
<gene>
    <name type="ordered locus">Pcar_2217</name>
</gene>
<reference key="1">
    <citation type="submission" date="2005-10" db="EMBL/GenBank/DDBJ databases">
        <title>Complete sequence of Pelobacter carbinolicus DSM 2380.</title>
        <authorList>
            <person name="Copeland A."/>
            <person name="Lucas S."/>
            <person name="Lapidus A."/>
            <person name="Barry K."/>
            <person name="Detter J.C."/>
            <person name="Glavina T."/>
            <person name="Hammon N."/>
            <person name="Israni S."/>
            <person name="Pitluck S."/>
            <person name="Chertkov O."/>
            <person name="Schmutz J."/>
            <person name="Larimer F."/>
            <person name="Land M."/>
            <person name="Kyrpides N."/>
            <person name="Ivanova N."/>
            <person name="Richardson P."/>
        </authorList>
    </citation>
    <scope>NUCLEOTIDE SEQUENCE [LARGE SCALE GENOMIC DNA]</scope>
    <source>
        <strain>DSM 2380 / NBRC 103641 / GraBd1</strain>
    </source>
</reference>
<keyword id="KW-1185">Reference proteome</keyword>
<dbReference type="EMBL" id="CP000142">
    <property type="protein sequence ID" value="ABA89456.1"/>
    <property type="molecule type" value="Genomic_DNA"/>
</dbReference>
<dbReference type="RefSeq" id="WP_011341971.1">
    <property type="nucleotide sequence ID" value="NC_007498.2"/>
</dbReference>
<dbReference type="SMR" id="Q3A2F1"/>
<dbReference type="STRING" id="338963.Pcar_2217"/>
<dbReference type="KEGG" id="pca:Pcar_2217"/>
<dbReference type="eggNOG" id="COG0792">
    <property type="taxonomic scope" value="Bacteria"/>
</dbReference>
<dbReference type="HOGENOM" id="CLU_115353_2_3_7"/>
<dbReference type="OrthoDB" id="9794876at2"/>
<dbReference type="Proteomes" id="UP000002534">
    <property type="component" value="Chromosome"/>
</dbReference>
<dbReference type="GO" id="GO:0003676">
    <property type="term" value="F:nucleic acid binding"/>
    <property type="evidence" value="ECO:0007669"/>
    <property type="project" value="InterPro"/>
</dbReference>
<dbReference type="CDD" id="cd20736">
    <property type="entry name" value="PoNe_Nuclease"/>
    <property type="match status" value="1"/>
</dbReference>
<dbReference type="Gene3D" id="3.40.1350.10">
    <property type="match status" value="1"/>
</dbReference>
<dbReference type="HAMAP" id="MF_00048">
    <property type="entry name" value="UPF0102"/>
    <property type="match status" value="1"/>
</dbReference>
<dbReference type="InterPro" id="IPR011335">
    <property type="entry name" value="Restrct_endonuc-II-like"/>
</dbReference>
<dbReference type="InterPro" id="IPR011856">
    <property type="entry name" value="tRNA_endonuc-like_dom_sf"/>
</dbReference>
<dbReference type="InterPro" id="IPR003509">
    <property type="entry name" value="UPF0102_YraN-like"/>
</dbReference>
<dbReference type="NCBIfam" id="NF009150">
    <property type="entry name" value="PRK12497.1-3"/>
    <property type="match status" value="1"/>
</dbReference>
<dbReference type="NCBIfam" id="NF009154">
    <property type="entry name" value="PRK12497.3-3"/>
    <property type="match status" value="1"/>
</dbReference>
<dbReference type="NCBIfam" id="TIGR00252">
    <property type="entry name" value="YraN family protein"/>
    <property type="match status" value="1"/>
</dbReference>
<dbReference type="PANTHER" id="PTHR34039">
    <property type="entry name" value="UPF0102 PROTEIN YRAN"/>
    <property type="match status" value="1"/>
</dbReference>
<dbReference type="PANTHER" id="PTHR34039:SF1">
    <property type="entry name" value="UPF0102 PROTEIN YRAN"/>
    <property type="match status" value="1"/>
</dbReference>
<dbReference type="Pfam" id="PF02021">
    <property type="entry name" value="UPF0102"/>
    <property type="match status" value="1"/>
</dbReference>
<dbReference type="SUPFAM" id="SSF52980">
    <property type="entry name" value="Restriction endonuclease-like"/>
    <property type="match status" value="1"/>
</dbReference>
<proteinExistence type="inferred from homology"/>